<reference key="1">
    <citation type="journal article" date="2006" name="Theor. Appl. Genet.">
        <title>Complete chloroplast genome sequences of Solanum bulbocastanum, Solanum lycopersicum and comparative analyses with other Solanaceae genomes.</title>
        <authorList>
            <person name="Daniell H."/>
            <person name="Lee S.-B."/>
            <person name="Grevich J."/>
            <person name="Saski C."/>
            <person name="Quesada-Vargas T."/>
            <person name="Guda C."/>
            <person name="Tomkins J."/>
            <person name="Jansen R.K."/>
        </authorList>
    </citation>
    <scope>NUCLEOTIDE SEQUENCE [LARGE SCALE GENOMIC DNA]</scope>
    <source>
        <strain>cv. LA3023</strain>
    </source>
</reference>
<reference key="2">
    <citation type="journal article" date="2006" name="J. Mol. Evol.">
        <title>Sequence of the tomato chloroplast DNA and evolutionary comparison of solanaceous plastid genomes.</title>
        <authorList>
            <person name="Kahlau S."/>
            <person name="Aspinall S."/>
            <person name="Gray J.C."/>
            <person name="Bock R."/>
        </authorList>
    </citation>
    <scope>NUCLEOTIDE SEQUENCE [LARGE SCALE GENOMIC DNA]</scope>
    <source>
        <strain>cv. IPA-6</strain>
    </source>
</reference>
<comment type="function">
    <text evidence="1">One of the components of the core complex of photosystem II (PSII). It binds chlorophyll and helps catalyze the primary light-induced photochemical processes of PSII. PSII is a light-driven water:plastoquinone oxidoreductase, using light energy to abstract electrons from H(2)O, generating O(2) and a proton gradient subsequently used for ATP formation.</text>
</comment>
<comment type="cofactor">
    <text evidence="1">Binds multiple chlorophylls. PSII binds additional chlorophylls, carotenoids and specific lipids.</text>
</comment>
<comment type="subunit">
    <text evidence="1">PSII is composed of 1 copy each of membrane proteins PsbA, PsbB, PsbC, PsbD, PsbE, PsbF, PsbH, PsbI, PsbJ, PsbK, PsbL, PsbM, PsbT, PsbX, PsbY, PsbZ, Psb30/Ycf12, at least 3 peripheral proteins of the oxygen-evolving complex and a large number of cofactors. It forms dimeric complexes.</text>
</comment>
<comment type="subcellular location">
    <subcellularLocation>
        <location evidence="1">Plastid</location>
        <location evidence="1">Chloroplast thylakoid membrane</location>
        <topology evidence="1">Multi-pass membrane protein</topology>
    </subcellularLocation>
</comment>
<comment type="similarity">
    <text evidence="1">Belongs to the PsbB/PsbC family. PsbB subfamily.</text>
</comment>
<sequence length="508" mass="56015">MGLPWYRVHTVVLNDPGRLLSVHIMHTALVAGWAGSMALYELAVFDPSDPVLDPMWRQGMFVIPFMTRLGITNSWGGWSITGGTVTNPGIWSYEGVAGAHIVFSGLCFLAAIWHWVYWDLEIFCDERTGKPSLDLPKIFGIHLFLSGVACFGFGAFHVTGLYGPGIWVSDPYGLTGKVQPVNPAWGVEGFDPFVPGGIASHHIAAGTLGILAGLFHLSVRPPQRLYKGLRMGNIETVLSSSIAAVFFAAFVVAGTMWYGSATTPIELFGPTRYQWDQGYFQQEIYRRVSAGLAENQSLSEAWSKIPEKLAFYDYIGNNPAKGGLFRAGSMDNGDGIAVGWLGHPIFRDKEGRELFVRRMPTFFETFPVVLVDGDGIVRADVPFRRAESKYSVEQVGVTVEFYGGELNGVSYSDPATVKKYARRAQLGEIFELDRATLKSDGVFRSSPRGWFTFGHASFALLFFFGHIWHGARTLFRDVFAGIDPDLDAQVEFGAFQKLGDPTTKRQAA</sequence>
<dbReference type="EMBL" id="DQ347959">
    <property type="protein sequence ID" value="ABC56325.1"/>
    <property type="molecule type" value="Genomic_DNA"/>
</dbReference>
<dbReference type="EMBL" id="AM087200">
    <property type="protein sequence ID" value="CAJ32420.1"/>
    <property type="molecule type" value="Genomic_DNA"/>
</dbReference>
<dbReference type="RefSeq" id="AP_004954.1">
    <property type="nucleotide sequence ID" value="AC_000188.1"/>
</dbReference>
<dbReference type="RefSeq" id="YP_008563114.1">
    <property type="nucleotide sequence ID" value="NC_007898.3"/>
</dbReference>
<dbReference type="SMR" id="Q2MI75"/>
<dbReference type="FunCoup" id="Q2MI75">
    <property type="interactions" value="391"/>
</dbReference>
<dbReference type="STRING" id="4081.Q2MI75"/>
<dbReference type="PaxDb" id="4081-Solyc01g007500.2.1"/>
<dbReference type="GeneID" id="3950388"/>
<dbReference type="KEGG" id="sly:3950388"/>
<dbReference type="eggNOG" id="ENOG502QRV6">
    <property type="taxonomic scope" value="Eukaryota"/>
</dbReference>
<dbReference type="InParanoid" id="Q2MI75"/>
<dbReference type="OrthoDB" id="375at2759"/>
<dbReference type="Proteomes" id="UP000004994">
    <property type="component" value="Chloroplast"/>
</dbReference>
<dbReference type="ExpressionAtlas" id="Q2MI75">
    <property type="expression patterns" value="baseline"/>
</dbReference>
<dbReference type="GO" id="GO:0009535">
    <property type="term" value="C:chloroplast thylakoid membrane"/>
    <property type="evidence" value="ECO:0007669"/>
    <property type="project" value="UniProtKB-SubCell"/>
</dbReference>
<dbReference type="GO" id="GO:0009523">
    <property type="term" value="C:photosystem II"/>
    <property type="evidence" value="ECO:0007669"/>
    <property type="project" value="UniProtKB-KW"/>
</dbReference>
<dbReference type="GO" id="GO:0016168">
    <property type="term" value="F:chlorophyll binding"/>
    <property type="evidence" value="ECO:0007669"/>
    <property type="project" value="UniProtKB-UniRule"/>
</dbReference>
<dbReference type="GO" id="GO:0045156">
    <property type="term" value="F:electron transporter, transferring electrons within the cyclic electron transport pathway of photosynthesis activity"/>
    <property type="evidence" value="ECO:0007669"/>
    <property type="project" value="InterPro"/>
</dbReference>
<dbReference type="GO" id="GO:0009772">
    <property type="term" value="P:photosynthetic electron transport in photosystem II"/>
    <property type="evidence" value="ECO:0007669"/>
    <property type="project" value="InterPro"/>
</dbReference>
<dbReference type="FunFam" id="3.10.680.10:FF:000001">
    <property type="entry name" value="Photosystem II CP47 reaction center protein"/>
    <property type="match status" value="1"/>
</dbReference>
<dbReference type="Gene3D" id="3.10.680.10">
    <property type="entry name" value="Photosystem II CP47 reaction center protein"/>
    <property type="match status" value="1"/>
</dbReference>
<dbReference type="HAMAP" id="MF_01495">
    <property type="entry name" value="PSII_PsbB_CP47"/>
    <property type="match status" value="1"/>
</dbReference>
<dbReference type="InterPro" id="IPR000932">
    <property type="entry name" value="PS_antenna-like"/>
</dbReference>
<dbReference type="InterPro" id="IPR036001">
    <property type="entry name" value="PS_II_antenna-like_sf"/>
</dbReference>
<dbReference type="InterPro" id="IPR017486">
    <property type="entry name" value="PSII_PsbB"/>
</dbReference>
<dbReference type="NCBIfam" id="TIGR03039">
    <property type="entry name" value="PS_II_CP47"/>
    <property type="match status" value="1"/>
</dbReference>
<dbReference type="PANTHER" id="PTHR33180">
    <property type="entry name" value="PHOTOSYSTEM II CP43 REACTION CENTER PROTEIN"/>
    <property type="match status" value="1"/>
</dbReference>
<dbReference type="PANTHER" id="PTHR33180:SF35">
    <property type="entry name" value="PHOTOSYSTEM II CP47 REACTION CENTER PROTEIN"/>
    <property type="match status" value="1"/>
</dbReference>
<dbReference type="Pfam" id="PF00421">
    <property type="entry name" value="PSII"/>
    <property type="match status" value="1"/>
</dbReference>
<dbReference type="SUPFAM" id="SSF161077">
    <property type="entry name" value="Photosystem II antenna protein-like"/>
    <property type="match status" value="1"/>
</dbReference>
<gene>
    <name evidence="1" type="primary">psbB</name>
</gene>
<accession>Q2MI75</accession>
<proteinExistence type="inferred from homology"/>
<organism>
    <name type="scientific">Solanum lycopersicum</name>
    <name type="common">Tomato</name>
    <name type="synonym">Lycopersicon esculentum</name>
    <dbReference type="NCBI Taxonomy" id="4081"/>
    <lineage>
        <taxon>Eukaryota</taxon>
        <taxon>Viridiplantae</taxon>
        <taxon>Streptophyta</taxon>
        <taxon>Embryophyta</taxon>
        <taxon>Tracheophyta</taxon>
        <taxon>Spermatophyta</taxon>
        <taxon>Magnoliopsida</taxon>
        <taxon>eudicotyledons</taxon>
        <taxon>Gunneridae</taxon>
        <taxon>Pentapetalae</taxon>
        <taxon>asterids</taxon>
        <taxon>lamiids</taxon>
        <taxon>Solanales</taxon>
        <taxon>Solanaceae</taxon>
        <taxon>Solanoideae</taxon>
        <taxon>Solaneae</taxon>
        <taxon>Solanum</taxon>
        <taxon>Solanum subgen. Lycopersicon</taxon>
    </lineage>
</organism>
<protein>
    <recommendedName>
        <fullName evidence="1">Photosystem II CP47 reaction center protein</fullName>
    </recommendedName>
    <alternativeName>
        <fullName evidence="1">PSII 47 kDa protein</fullName>
    </alternativeName>
    <alternativeName>
        <fullName evidence="1">Protein CP-47</fullName>
    </alternativeName>
</protein>
<evidence type="ECO:0000255" key="1">
    <source>
        <dbReference type="HAMAP-Rule" id="MF_01495"/>
    </source>
</evidence>
<name>PSBB_SOLLC</name>
<keyword id="KW-0148">Chlorophyll</keyword>
<keyword id="KW-0150">Chloroplast</keyword>
<keyword id="KW-0157">Chromophore</keyword>
<keyword id="KW-0472">Membrane</keyword>
<keyword id="KW-0602">Photosynthesis</keyword>
<keyword id="KW-0604">Photosystem II</keyword>
<keyword id="KW-0934">Plastid</keyword>
<keyword id="KW-1185">Reference proteome</keyword>
<keyword id="KW-0793">Thylakoid</keyword>
<keyword id="KW-0812">Transmembrane</keyword>
<keyword id="KW-1133">Transmembrane helix</keyword>
<feature type="chain" id="PRO_0000277419" description="Photosystem II CP47 reaction center protein">
    <location>
        <begin position="1"/>
        <end position="508"/>
    </location>
</feature>
<feature type="transmembrane region" description="Helical" evidence="1">
    <location>
        <begin position="21"/>
        <end position="36"/>
    </location>
</feature>
<feature type="transmembrane region" description="Helical" evidence="1">
    <location>
        <begin position="101"/>
        <end position="115"/>
    </location>
</feature>
<feature type="transmembrane region" description="Helical" evidence="1">
    <location>
        <begin position="140"/>
        <end position="156"/>
    </location>
</feature>
<feature type="transmembrane region" description="Helical" evidence="1">
    <location>
        <begin position="203"/>
        <end position="218"/>
    </location>
</feature>
<feature type="transmembrane region" description="Helical" evidence="1">
    <location>
        <begin position="237"/>
        <end position="252"/>
    </location>
</feature>
<feature type="transmembrane region" description="Helical" evidence="1">
    <location>
        <begin position="457"/>
        <end position="472"/>
    </location>
</feature>
<geneLocation type="chloroplast"/>